<feature type="chain" id="PRO_1000184488" description="ATP synthase subunit c">
    <location>
        <begin position="1"/>
        <end position="79"/>
    </location>
</feature>
<feature type="transmembrane region" description="Helical" evidence="1">
    <location>
        <begin position="11"/>
        <end position="31"/>
    </location>
</feature>
<feature type="transmembrane region" description="Helical" evidence="1">
    <location>
        <begin position="53"/>
        <end position="73"/>
    </location>
</feature>
<feature type="site" description="Reversibly protonated during proton transport" evidence="1">
    <location>
        <position position="61"/>
    </location>
</feature>
<keyword id="KW-0066">ATP synthesis</keyword>
<keyword id="KW-0997">Cell inner membrane</keyword>
<keyword id="KW-1003">Cell membrane</keyword>
<keyword id="KW-0138">CF(0)</keyword>
<keyword id="KW-0375">Hydrogen ion transport</keyword>
<keyword id="KW-0406">Ion transport</keyword>
<keyword id="KW-0446">Lipid-binding</keyword>
<keyword id="KW-0472">Membrane</keyword>
<keyword id="KW-0812">Transmembrane</keyword>
<keyword id="KW-1133">Transmembrane helix</keyword>
<keyword id="KW-0813">Transport</keyword>
<proteinExistence type="inferred from homology"/>
<dbReference type="EMBL" id="CP000266">
    <property type="protein sequence ID" value="ABF05776.1"/>
    <property type="molecule type" value="Genomic_DNA"/>
</dbReference>
<dbReference type="RefSeq" id="WP_000429386.1">
    <property type="nucleotide sequence ID" value="NC_008258.1"/>
</dbReference>
<dbReference type="SMR" id="Q0SYT9"/>
<dbReference type="GeneID" id="98390858"/>
<dbReference type="KEGG" id="sfv:SFV_3763"/>
<dbReference type="HOGENOM" id="CLU_148047_1_0_6"/>
<dbReference type="Proteomes" id="UP000000659">
    <property type="component" value="Chromosome"/>
</dbReference>
<dbReference type="GO" id="GO:0005886">
    <property type="term" value="C:plasma membrane"/>
    <property type="evidence" value="ECO:0007669"/>
    <property type="project" value="UniProtKB-SubCell"/>
</dbReference>
<dbReference type="GO" id="GO:0045259">
    <property type="term" value="C:proton-transporting ATP synthase complex"/>
    <property type="evidence" value="ECO:0007669"/>
    <property type="project" value="UniProtKB-KW"/>
</dbReference>
<dbReference type="GO" id="GO:0033177">
    <property type="term" value="C:proton-transporting two-sector ATPase complex, proton-transporting domain"/>
    <property type="evidence" value="ECO:0007669"/>
    <property type="project" value="InterPro"/>
</dbReference>
<dbReference type="GO" id="GO:0008289">
    <property type="term" value="F:lipid binding"/>
    <property type="evidence" value="ECO:0007669"/>
    <property type="project" value="UniProtKB-KW"/>
</dbReference>
<dbReference type="GO" id="GO:0046933">
    <property type="term" value="F:proton-transporting ATP synthase activity, rotational mechanism"/>
    <property type="evidence" value="ECO:0007669"/>
    <property type="project" value="UniProtKB-UniRule"/>
</dbReference>
<dbReference type="CDD" id="cd18185">
    <property type="entry name" value="ATP-synt_Fo_c_ATPE"/>
    <property type="match status" value="1"/>
</dbReference>
<dbReference type="FunFam" id="1.20.20.10:FF:000002">
    <property type="entry name" value="ATP synthase subunit c"/>
    <property type="match status" value="1"/>
</dbReference>
<dbReference type="Gene3D" id="1.20.20.10">
    <property type="entry name" value="F1F0 ATP synthase subunit C"/>
    <property type="match status" value="1"/>
</dbReference>
<dbReference type="HAMAP" id="MF_01396">
    <property type="entry name" value="ATP_synth_c_bact"/>
    <property type="match status" value="1"/>
</dbReference>
<dbReference type="InterPro" id="IPR005953">
    <property type="entry name" value="ATP_synth_csu_bac/chlpt"/>
</dbReference>
<dbReference type="InterPro" id="IPR000454">
    <property type="entry name" value="ATP_synth_F0_csu"/>
</dbReference>
<dbReference type="InterPro" id="IPR020537">
    <property type="entry name" value="ATP_synth_F0_csu_DDCD_BS"/>
</dbReference>
<dbReference type="InterPro" id="IPR038662">
    <property type="entry name" value="ATP_synth_F0_csu_sf"/>
</dbReference>
<dbReference type="InterPro" id="IPR002379">
    <property type="entry name" value="ATPase_proteolipid_c-like_dom"/>
</dbReference>
<dbReference type="InterPro" id="IPR035921">
    <property type="entry name" value="F/V-ATP_Csub_sf"/>
</dbReference>
<dbReference type="NCBIfam" id="TIGR01260">
    <property type="entry name" value="ATP_synt_c"/>
    <property type="match status" value="1"/>
</dbReference>
<dbReference type="NCBIfam" id="NF005363">
    <property type="entry name" value="PRK06876.1"/>
    <property type="match status" value="1"/>
</dbReference>
<dbReference type="Pfam" id="PF00137">
    <property type="entry name" value="ATP-synt_C"/>
    <property type="match status" value="1"/>
</dbReference>
<dbReference type="PRINTS" id="PR00124">
    <property type="entry name" value="ATPASEC"/>
</dbReference>
<dbReference type="SUPFAM" id="SSF81333">
    <property type="entry name" value="F1F0 ATP synthase subunit C"/>
    <property type="match status" value="1"/>
</dbReference>
<dbReference type="PROSITE" id="PS00605">
    <property type="entry name" value="ATPASE_C"/>
    <property type="match status" value="1"/>
</dbReference>
<gene>
    <name evidence="1" type="primary">atpE</name>
    <name type="ordered locus">SFV_3763</name>
</gene>
<sequence>MENLNMDLLYMAAAVMMGLAAIGAAIGIGILGGKFLEGAARQPDLIPLLRTQFFIVMGLVDAIPMIAVGLGLYVMFAVA</sequence>
<accession>Q0SYT9</accession>
<protein>
    <recommendedName>
        <fullName evidence="1">ATP synthase subunit c</fullName>
    </recommendedName>
    <alternativeName>
        <fullName evidence="1">ATP synthase F(0) sector subunit c</fullName>
    </alternativeName>
    <alternativeName>
        <fullName evidence="1">F-type ATPase subunit c</fullName>
        <shortName evidence="1">F-ATPase subunit c</shortName>
    </alternativeName>
    <alternativeName>
        <fullName evidence="1">Lipid-binding protein</fullName>
    </alternativeName>
</protein>
<organism>
    <name type="scientific">Shigella flexneri serotype 5b (strain 8401)</name>
    <dbReference type="NCBI Taxonomy" id="373384"/>
    <lineage>
        <taxon>Bacteria</taxon>
        <taxon>Pseudomonadati</taxon>
        <taxon>Pseudomonadota</taxon>
        <taxon>Gammaproteobacteria</taxon>
        <taxon>Enterobacterales</taxon>
        <taxon>Enterobacteriaceae</taxon>
        <taxon>Shigella</taxon>
    </lineage>
</organism>
<comment type="function">
    <text evidence="1">F(1)F(0) ATP synthase produces ATP from ADP in the presence of a proton or sodium gradient. F-type ATPases consist of two structural domains, F(1) containing the extramembraneous catalytic core and F(0) containing the membrane proton channel, linked together by a central stalk and a peripheral stalk. During catalysis, ATP synthesis in the catalytic domain of F(1) is coupled via a rotary mechanism of the central stalk subunits to proton translocation.</text>
</comment>
<comment type="function">
    <text evidence="1">Key component of the F(0) channel; it plays a direct role in translocation across the membrane. A homomeric c-ring of between 10-14 subunits forms the central stalk rotor element with the F(1) delta and epsilon subunits.</text>
</comment>
<comment type="subunit">
    <text evidence="1">F-type ATPases have 2 components, F(1) - the catalytic core - and F(0) - the membrane proton channel. F(1) has five subunits: alpha(3), beta(3), gamma(1), delta(1), epsilon(1). F(0) has three main subunits: a(1), b(2) and c(10-14). The alpha and beta chains form an alternating ring which encloses part of the gamma chain. F(1) is attached to F(0) by a central stalk formed by the gamma and epsilon chains, while a peripheral stalk is formed by the delta and b chains.</text>
</comment>
<comment type="subcellular location">
    <subcellularLocation>
        <location evidence="1">Cell inner membrane</location>
        <topology evidence="1">Multi-pass membrane protein</topology>
    </subcellularLocation>
</comment>
<comment type="similarity">
    <text evidence="1">Belongs to the ATPase C chain family.</text>
</comment>
<evidence type="ECO:0000255" key="1">
    <source>
        <dbReference type="HAMAP-Rule" id="MF_01396"/>
    </source>
</evidence>
<name>ATPL_SHIF8</name>
<reference key="1">
    <citation type="journal article" date="2006" name="BMC Genomics">
        <title>Complete genome sequence of Shigella flexneri 5b and comparison with Shigella flexneri 2a.</title>
        <authorList>
            <person name="Nie H."/>
            <person name="Yang F."/>
            <person name="Zhang X."/>
            <person name="Yang J."/>
            <person name="Chen L."/>
            <person name="Wang J."/>
            <person name="Xiong Z."/>
            <person name="Peng J."/>
            <person name="Sun L."/>
            <person name="Dong J."/>
            <person name="Xue Y."/>
            <person name="Xu X."/>
            <person name="Chen S."/>
            <person name="Yao Z."/>
            <person name="Shen Y."/>
            <person name="Jin Q."/>
        </authorList>
    </citation>
    <scope>NUCLEOTIDE SEQUENCE [LARGE SCALE GENOMIC DNA]</scope>
    <source>
        <strain>8401</strain>
    </source>
</reference>